<reference key="1">
    <citation type="journal article" date="2004" name="Proc. Natl. Acad. Sci. U.S.A.">
        <title>Genomic plasticity of the causative agent of melioidosis, Burkholderia pseudomallei.</title>
        <authorList>
            <person name="Holden M.T.G."/>
            <person name="Titball R.W."/>
            <person name="Peacock S.J."/>
            <person name="Cerdeno-Tarraga A.-M."/>
            <person name="Atkins T."/>
            <person name="Crossman L.C."/>
            <person name="Pitt T."/>
            <person name="Churcher C."/>
            <person name="Mungall K.L."/>
            <person name="Bentley S.D."/>
            <person name="Sebaihia M."/>
            <person name="Thomson N.R."/>
            <person name="Bason N."/>
            <person name="Beacham I.R."/>
            <person name="Brooks K."/>
            <person name="Brown K.A."/>
            <person name="Brown N.F."/>
            <person name="Challis G.L."/>
            <person name="Cherevach I."/>
            <person name="Chillingworth T."/>
            <person name="Cronin A."/>
            <person name="Crossett B."/>
            <person name="Davis P."/>
            <person name="DeShazer D."/>
            <person name="Feltwell T."/>
            <person name="Fraser A."/>
            <person name="Hance Z."/>
            <person name="Hauser H."/>
            <person name="Holroyd S."/>
            <person name="Jagels K."/>
            <person name="Keith K.E."/>
            <person name="Maddison M."/>
            <person name="Moule S."/>
            <person name="Price C."/>
            <person name="Quail M.A."/>
            <person name="Rabbinowitsch E."/>
            <person name="Rutherford K."/>
            <person name="Sanders M."/>
            <person name="Simmonds M."/>
            <person name="Songsivilai S."/>
            <person name="Stevens K."/>
            <person name="Tumapa S."/>
            <person name="Vesaratchavest M."/>
            <person name="Whitehead S."/>
            <person name="Yeats C."/>
            <person name="Barrell B.G."/>
            <person name="Oyston P.C.F."/>
            <person name="Parkhill J."/>
        </authorList>
    </citation>
    <scope>NUCLEOTIDE SEQUENCE [LARGE SCALE GENOMIC DNA]</scope>
    <source>
        <strain>K96243</strain>
    </source>
</reference>
<sequence>MSRPDQAARRRAIAAELHVSPTFDARDEAERRIGFVADYLRTAGLRACVLGISGGIDSSTAGRLAQLAVERLRASGYDARFVAMRLPYGAQHDEADARRALAFVRADETLTVDVKPAADAMLAALAAGGLAYLDHAQQDFVLGNIKARERMIAQYAVAGARNGVVIGTDHAAESVMGFFTKFGDGGADVLPLAGLTKRRVRALARMLGADEPLVLKTPTADLETLRPQRPDEHAYGITYEQIDDFLEGKPMDDAVAETVLRFYDATRHKRALPYTMFDWPGHPA</sequence>
<feature type="chain" id="PRO_1000099013" description="NH(3)-dependent NAD(+) synthetase">
    <location>
        <begin position="1"/>
        <end position="284"/>
    </location>
</feature>
<feature type="binding site" evidence="1">
    <location>
        <begin position="51"/>
        <end position="58"/>
    </location>
    <ligand>
        <name>ATP</name>
        <dbReference type="ChEBI" id="CHEBI:30616"/>
    </ligand>
</feature>
<feature type="binding site" evidence="1">
    <location>
        <position position="57"/>
    </location>
    <ligand>
        <name>Mg(2+)</name>
        <dbReference type="ChEBI" id="CHEBI:18420"/>
    </ligand>
</feature>
<feature type="binding site" evidence="1">
    <location>
        <position position="148"/>
    </location>
    <ligand>
        <name>deamido-NAD(+)</name>
        <dbReference type="ChEBI" id="CHEBI:58437"/>
    </ligand>
</feature>
<feature type="binding site" evidence="1">
    <location>
        <position position="168"/>
    </location>
    <ligand>
        <name>ATP</name>
        <dbReference type="ChEBI" id="CHEBI:30616"/>
    </ligand>
</feature>
<feature type="binding site" evidence="1">
    <location>
        <position position="173"/>
    </location>
    <ligand>
        <name>Mg(2+)</name>
        <dbReference type="ChEBI" id="CHEBI:18420"/>
    </ligand>
</feature>
<feature type="binding site" evidence="1">
    <location>
        <position position="181"/>
    </location>
    <ligand>
        <name>deamido-NAD(+)</name>
        <dbReference type="ChEBI" id="CHEBI:58437"/>
    </ligand>
</feature>
<feature type="binding site" evidence="1">
    <location>
        <position position="188"/>
    </location>
    <ligand>
        <name>deamido-NAD(+)</name>
        <dbReference type="ChEBI" id="CHEBI:58437"/>
    </ligand>
</feature>
<feature type="binding site" evidence="1">
    <location>
        <position position="197"/>
    </location>
    <ligand>
        <name>ATP</name>
        <dbReference type="ChEBI" id="CHEBI:30616"/>
    </ligand>
</feature>
<feature type="binding site" evidence="1">
    <location>
        <position position="219"/>
    </location>
    <ligand>
        <name>ATP</name>
        <dbReference type="ChEBI" id="CHEBI:30616"/>
    </ligand>
</feature>
<feature type="binding site" evidence="1">
    <location>
        <begin position="268"/>
        <end position="269"/>
    </location>
    <ligand>
        <name>deamido-NAD(+)</name>
        <dbReference type="ChEBI" id="CHEBI:58437"/>
    </ligand>
</feature>
<dbReference type="EC" id="6.3.1.5" evidence="1"/>
<dbReference type="EMBL" id="BX571966">
    <property type="protein sequence ID" value="CAH38955.1"/>
    <property type="molecule type" value="Genomic_DNA"/>
</dbReference>
<dbReference type="RefSeq" id="WP_004525360.1">
    <property type="nucleotide sequence ID" value="NZ_CP009537.1"/>
</dbReference>
<dbReference type="RefSeq" id="YP_111489.1">
    <property type="nucleotide sequence ID" value="NC_006351.1"/>
</dbReference>
<dbReference type="SMR" id="Q63K83"/>
<dbReference type="STRING" id="272560.BPSS1482"/>
<dbReference type="GeneID" id="93063658"/>
<dbReference type="KEGG" id="bps:BPSS1482"/>
<dbReference type="PATRIC" id="fig|272560.51.peg.4824"/>
<dbReference type="eggNOG" id="COG0171">
    <property type="taxonomic scope" value="Bacteria"/>
</dbReference>
<dbReference type="UniPathway" id="UPA00253">
    <property type="reaction ID" value="UER00333"/>
</dbReference>
<dbReference type="Proteomes" id="UP000000605">
    <property type="component" value="Chromosome 2"/>
</dbReference>
<dbReference type="GO" id="GO:0005737">
    <property type="term" value="C:cytoplasm"/>
    <property type="evidence" value="ECO:0007669"/>
    <property type="project" value="InterPro"/>
</dbReference>
<dbReference type="GO" id="GO:0005524">
    <property type="term" value="F:ATP binding"/>
    <property type="evidence" value="ECO:0007669"/>
    <property type="project" value="UniProtKB-UniRule"/>
</dbReference>
<dbReference type="GO" id="GO:0004359">
    <property type="term" value="F:glutaminase activity"/>
    <property type="evidence" value="ECO:0007669"/>
    <property type="project" value="InterPro"/>
</dbReference>
<dbReference type="GO" id="GO:0046872">
    <property type="term" value="F:metal ion binding"/>
    <property type="evidence" value="ECO:0007669"/>
    <property type="project" value="UniProtKB-KW"/>
</dbReference>
<dbReference type="GO" id="GO:0003952">
    <property type="term" value="F:NAD+ synthase (glutamine-hydrolyzing) activity"/>
    <property type="evidence" value="ECO:0007669"/>
    <property type="project" value="InterPro"/>
</dbReference>
<dbReference type="GO" id="GO:0008795">
    <property type="term" value="F:NAD+ synthase activity"/>
    <property type="evidence" value="ECO:0007669"/>
    <property type="project" value="UniProtKB-UniRule"/>
</dbReference>
<dbReference type="GO" id="GO:0009435">
    <property type="term" value="P:NAD biosynthetic process"/>
    <property type="evidence" value="ECO:0007669"/>
    <property type="project" value="UniProtKB-UniRule"/>
</dbReference>
<dbReference type="CDD" id="cd00553">
    <property type="entry name" value="NAD_synthase"/>
    <property type="match status" value="1"/>
</dbReference>
<dbReference type="Gene3D" id="3.40.50.620">
    <property type="entry name" value="HUPs"/>
    <property type="match status" value="1"/>
</dbReference>
<dbReference type="HAMAP" id="MF_00193">
    <property type="entry name" value="NadE_ammonia_dep"/>
    <property type="match status" value="1"/>
</dbReference>
<dbReference type="InterPro" id="IPR022310">
    <property type="entry name" value="NAD/GMP_synthase"/>
</dbReference>
<dbReference type="InterPro" id="IPR003694">
    <property type="entry name" value="NAD_synthase"/>
</dbReference>
<dbReference type="InterPro" id="IPR022926">
    <property type="entry name" value="NH(3)-dep_NAD(+)_synth"/>
</dbReference>
<dbReference type="InterPro" id="IPR014729">
    <property type="entry name" value="Rossmann-like_a/b/a_fold"/>
</dbReference>
<dbReference type="NCBIfam" id="TIGR00552">
    <property type="entry name" value="nadE"/>
    <property type="match status" value="1"/>
</dbReference>
<dbReference type="NCBIfam" id="NF001979">
    <property type="entry name" value="PRK00768.1"/>
    <property type="match status" value="1"/>
</dbReference>
<dbReference type="PANTHER" id="PTHR23090">
    <property type="entry name" value="NH 3 /GLUTAMINE-DEPENDENT NAD + SYNTHETASE"/>
    <property type="match status" value="1"/>
</dbReference>
<dbReference type="PANTHER" id="PTHR23090:SF7">
    <property type="entry name" value="NH(3)-DEPENDENT NAD(+) SYNTHETASE"/>
    <property type="match status" value="1"/>
</dbReference>
<dbReference type="Pfam" id="PF02540">
    <property type="entry name" value="NAD_synthase"/>
    <property type="match status" value="1"/>
</dbReference>
<dbReference type="SUPFAM" id="SSF52402">
    <property type="entry name" value="Adenine nucleotide alpha hydrolases-like"/>
    <property type="match status" value="1"/>
</dbReference>
<keyword id="KW-0067">ATP-binding</keyword>
<keyword id="KW-0436">Ligase</keyword>
<keyword id="KW-0460">Magnesium</keyword>
<keyword id="KW-0479">Metal-binding</keyword>
<keyword id="KW-0520">NAD</keyword>
<keyword id="KW-0547">Nucleotide-binding</keyword>
<keyword id="KW-1185">Reference proteome</keyword>
<protein>
    <recommendedName>
        <fullName evidence="1">NH(3)-dependent NAD(+) synthetase</fullName>
        <ecNumber evidence="1">6.3.1.5</ecNumber>
    </recommendedName>
</protein>
<name>NADE_BURPS</name>
<organism>
    <name type="scientific">Burkholderia pseudomallei (strain K96243)</name>
    <dbReference type="NCBI Taxonomy" id="272560"/>
    <lineage>
        <taxon>Bacteria</taxon>
        <taxon>Pseudomonadati</taxon>
        <taxon>Pseudomonadota</taxon>
        <taxon>Betaproteobacteria</taxon>
        <taxon>Burkholderiales</taxon>
        <taxon>Burkholderiaceae</taxon>
        <taxon>Burkholderia</taxon>
        <taxon>pseudomallei group</taxon>
    </lineage>
</organism>
<accession>Q63K83</accession>
<comment type="function">
    <text evidence="1">Catalyzes the ATP-dependent amidation of deamido-NAD to form NAD. Uses ammonia as a nitrogen source.</text>
</comment>
<comment type="catalytic activity">
    <reaction evidence="1">
        <text>deamido-NAD(+) + NH4(+) + ATP = AMP + diphosphate + NAD(+) + H(+)</text>
        <dbReference type="Rhea" id="RHEA:21188"/>
        <dbReference type="ChEBI" id="CHEBI:15378"/>
        <dbReference type="ChEBI" id="CHEBI:28938"/>
        <dbReference type="ChEBI" id="CHEBI:30616"/>
        <dbReference type="ChEBI" id="CHEBI:33019"/>
        <dbReference type="ChEBI" id="CHEBI:57540"/>
        <dbReference type="ChEBI" id="CHEBI:58437"/>
        <dbReference type="ChEBI" id="CHEBI:456215"/>
        <dbReference type="EC" id="6.3.1.5"/>
    </reaction>
</comment>
<comment type="pathway">
    <text evidence="1">Cofactor biosynthesis; NAD(+) biosynthesis; NAD(+) from deamido-NAD(+) (ammonia route): step 1/1.</text>
</comment>
<comment type="subunit">
    <text evidence="1">Homodimer.</text>
</comment>
<comment type="similarity">
    <text evidence="1">Belongs to the NAD synthetase family.</text>
</comment>
<gene>
    <name evidence="1" type="primary">nadE</name>
    <name type="ordered locus">BPSS1482</name>
</gene>
<proteinExistence type="inferred from homology"/>
<evidence type="ECO:0000255" key="1">
    <source>
        <dbReference type="HAMAP-Rule" id="MF_00193"/>
    </source>
</evidence>